<keyword id="KW-0119">Carbohydrate metabolism</keyword>
<keyword id="KW-0963">Cytoplasm</keyword>
<keyword id="KW-0294">Fucose metabolism</keyword>
<keyword id="KW-0413">Isomerase</keyword>
<keyword id="KW-0464">Manganese</keyword>
<keyword id="KW-0479">Metal-binding</keyword>
<keyword id="KW-1185">Reference proteome</keyword>
<proteinExistence type="inferred from homology"/>
<evidence type="ECO:0000255" key="1">
    <source>
        <dbReference type="HAMAP-Rule" id="MF_01254"/>
    </source>
</evidence>
<dbReference type="EC" id="5.3.1.25" evidence="1"/>
<dbReference type="EMBL" id="CU928145">
    <property type="protein sequence ID" value="CAU98977.1"/>
    <property type="molecule type" value="Genomic_DNA"/>
</dbReference>
<dbReference type="RefSeq" id="WP_000724173.1">
    <property type="nucleotide sequence ID" value="NC_011748.1"/>
</dbReference>
<dbReference type="SMR" id="B7LEY2"/>
<dbReference type="KEGG" id="eck:EC55989_3081"/>
<dbReference type="HOGENOM" id="CLU_033326_1_0_6"/>
<dbReference type="UniPathway" id="UPA00563">
    <property type="reaction ID" value="UER00624"/>
</dbReference>
<dbReference type="Proteomes" id="UP000000746">
    <property type="component" value="Chromosome"/>
</dbReference>
<dbReference type="GO" id="GO:0005737">
    <property type="term" value="C:cytoplasm"/>
    <property type="evidence" value="ECO:0007669"/>
    <property type="project" value="UniProtKB-SubCell"/>
</dbReference>
<dbReference type="GO" id="GO:0008790">
    <property type="term" value="F:arabinose isomerase activity"/>
    <property type="evidence" value="ECO:0007669"/>
    <property type="project" value="TreeGrafter"/>
</dbReference>
<dbReference type="GO" id="GO:0008736">
    <property type="term" value="F:L-fucose isomerase activity"/>
    <property type="evidence" value="ECO:0007669"/>
    <property type="project" value="UniProtKB-UniRule"/>
</dbReference>
<dbReference type="GO" id="GO:0030145">
    <property type="term" value="F:manganese ion binding"/>
    <property type="evidence" value="ECO:0007669"/>
    <property type="project" value="UniProtKB-UniRule"/>
</dbReference>
<dbReference type="GO" id="GO:0019571">
    <property type="term" value="P:D-arabinose catabolic process"/>
    <property type="evidence" value="ECO:0007669"/>
    <property type="project" value="TreeGrafter"/>
</dbReference>
<dbReference type="GO" id="GO:0042355">
    <property type="term" value="P:L-fucose catabolic process"/>
    <property type="evidence" value="ECO:0007669"/>
    <property type="project" value="UniProtKB-UniRule"/>
</dbReference>
<dbReference type="CDD" id="cd03556">
    <property type="entry name" value="L-fucose_isomerase"/>
    <property type="match status" value="1"/>
</dbReference>
<dbReference type="FunFam" id="3.20.14.10:FF:000001">
    <property type="entry name" value="L-fucose isomerase"/>
    <property type="match status" value="1"/>
</dbReference>
<dbReference type="FunFam" id="3.40.275.10:FF:000001">
    <property type="entry name" value="L-fucose isomerase"/>
    <property type="match status" value="1"/>
</dbReference>
<dbReference type="FunFam" id="3.40.50.1070:FF:000001">
    <property type="entry name" value="L-fucose isomerase"/>
    <property type="match status" value="1"/>
</dbReference>
<dbReference type="Gene3D" id="3.40.50.1070">
    <property type="match status" value="1"/>
</dbReference>
<dbReference type="Gene3D" id="3.40.275.10">
    <property type="entry name" value="L-fucose Isomerase, Chain A, domain 2"/>
    <property type="match status" value="1"/>
</dbReference>
<dbReference type="Gene3D" id="3.20.14.10">
    <property type="entry name" value="L-fucose/L-arabinose isomerase, C-terminal"/>
    <property type="match status" value="1"/>
</dbReference>
<dbReference type="HAMAP" id="MF_01254">
    <property type="entry name" value="Fucose_iso"/>
    <property type="match status" value="1"/>
</dbReference>
<dbReference type="InterPro" id="IPR004216">
    <property type="entry name" value="Fuc/Ara_isomerase_C"/>
</dbReference>
<dbReference type="InterPro" id="IPR038393">
    <property type="entry name" value="Fuc_iso_dom3_sf"/>
</dbReference>
<dbReference type="InterPro" id="IPR015888">
    <property type="entry name" value="Fuc_isomerase_C"/>
</dbReference>
<dbReference type="InterPro" id="IPR038391">
    <property type="entry name" value="Fucose_iso_dom1_sf"/>
</dbReference>
<dbReference type="InterPro" id="IPR012888">
    <property type="entry name" value="Fucose_iso_N1"/>
</dbReference>
<dbReference type="InterPro" id="IPR005763">
    <property type="entry name" value="Fucose_isomerase"/>
</dbReference>
<dbReference type="InterPro" id="IPR038392">
    <property type="entry name" value="Fucose_isomerase_dom2_sf"/>
</dbReference>
<dbReference type="InterPro" id="IPR009015">
    <property type="entry name" value="Fucose_isomerase_N/cen_sf"/>
</dbReference>
<dbReference type="InterPro" id="IPR012889">
    <property type="entry name" value="Fucose_isomerase_N2"/>
</dbReference>
<dbReference type="NCBIfam" id="TIGR01089">
    <property type="entry name" value="fucI"/>
    <property type="match status" value="1"/>
</dbReference>
<dbReference type="NCBIfam" id="NF008220">
    <property type="entry name" value="PRK10991.1"/>
    <property type="match status" value="1"/>
</dbReference>
<dbReference type="PANTHER" id="PTHR37840">
    <property type="entry name" value="L-FUCOSE ISOMERASE"/>
    <property type="match status" value="1"/>
</dbReference>
<dbReference type="PANTHER" id="PTHR37840:SF1">
    <property type="entry name" value="L-FUCOSE ISOMERASE"/>
    <property type="match status" value="1"/>
</dbReference>
<dbReference type="Pfam" id="PF02952">
    <property type="entry name" value="Fucose_iso_C"/>
    <property type="match status" value="1"/>
</dbReference>
<dbReference type="Pfam" id="PF07881">
    <property type="entry name" value="Fucose_iso_N1"/>
    <property type="match status" value="1"/>
</dbReference>
<dbReference type="Pfam" id="PF07882">
    <property type="entry name" value="Fucose_iso_N2"/>
    <property type="match status" value="1"/>
</dbReference>
<dbReference type="SUPFAM" id="SSF50443">
    <property type="entry name" value="FucI/AraA C-terminal domain-like"/>
    <property type="match status" value="1"/>
</dbReference>
<dbReference type="SUPFAM" id="SSF53743">
    <property type="entry name" value="FucI/AraA N-terminal and middle domains"/>
    <property type="match status" value="1"/>
</dbReference>
<reference key="1">
    <citation type="journal article" date="2009" name="PLoS Genet.">
        <title>Organised genome dynamics in the Escherichia coli species results in highly diverse adaptive paths.</title>
        <authorList>
            <person name="Touchon M."/>
            <person name="Hoede C."/>
            <person name="Tenaillon O."/>
            <person name="Barbe V."/>
            <person name="Baeriswyl S."/>
            <person name="Bidet P."/>
            <person name="Bingen E."/>
            <person name="Bonacorsi S."/>
            <person name="Bouchier C."/>
            <person name="Bouvet O."/>
            <person name="Calteau A."/>
            <person name="Chiapello H."/>
            <person name="Clermont O."/>
            <person name="Cruveiller S."/>
            <person name="Danchin A."/>
            <person name="Diard M."/>
            <person name="Dossat C."/>
            <person name="Karoui M.E."/>
            <person name="Frapy E."/>
            <person name="Garry L."/>
            <person name="Ghigo J.M."/>
            <person name="Gilles A.M."/>
            <person name="Johnson J."/>
            <person name="Le Bouguenec C."/>
            <person name="Lescat M."/>
            <person name="Mangenot S."/>
            <person name="Martinez-Jehanne V."/>
            <person name="Matic I."/>
            <person name="Nassif X."/>
            <person name="Oztas S."/>
            <person name="Petit M.A."/>
            <person name="Pichon C."/>
            <person name="Rouy Z."/>
            <person name="Ruf C.S."/>
            <person name="Schneider D."/>
            <person name="Tourret J."/>
            <person name="Vacherie B."/>
            <person name="Vallenet D."/>
            <person name="Medigue C."/>
            <person name="Rocha E.P.C."/>
            <person name="Denamur E."/>
        </authorList>
    </citation>
    <scope>NUCLEOTIDE SEQUENCE [LARGE SCALE GENOMIC DNA]</scope>
    <source>
        <strain>55989 / EAEC</strain>
    </source>
</reference>
<name>FUCI_ECO55</name>
<protein>
    <recommendedName>
        <fullName evidence="1">L-fucose isomerase</fullName>
        <ecNumber evidence="1">5.3.1.25</ecNumber>
    </recommendedName>
    <alternativeName>
        <fullName evidence="1">6-deoxy-L-galactose isomerase</fullName>
    </alternativeName>
    <alternativeName>
        <fullName>FucIase</fullName>
    </alternativeName>
</protein>
<accession>B7LEY2</accession>
<comment type="function">
    <text evidence="1">Converts the aldose L-fucose into the corresponding ketose L-fuculose.</text>
</comment>
<comment type="catalytic activity">
    <reaction evidence="1">
        <text>L-fucose = L-fuculose</text>
        <dbReference type="Rhea" id="RHEA:17233"/>
        <dbReference type="ChEBI" id="CHEBI:2181"/>
        <dbReference type="ChEBI" id="CHEBI:17617"/>
        <dbReference type="EC" id="5.3.1.25"/>
    </reaction>
</comment>
<comment type="cofactor">
    <cofactor evidence="1">
        <name>Mn(2+)</name>
        <dbReference type="ChEBI" id="CHEBI:29035"/>
    </cofactor>
</comment>
<comment type="pathway">
    <text evidence="1">Carbohydrate degradation; L-fucose degradation; L-lactaldehyde and glycerone phosphate from L-fucose: step 1/3.</text>
</comment>
<comment type="subunit">
    <text evidence="1">Homohexamer.</text>
</comment>
<comment type="subcellular location">
    <subcellularLocation>
        <location evidence="1">Cytoplasm</location>
    </subcellularLocation>
</comment>
<comment type="similarity">
    <text evidence="1">Belongs to the L-fucose isomerase family.</text>
</comment>
<sequence length="591" mass="65007">MKKISLPKIGIRPVIDGRRMGVRESLEEQTMNMAKATAALLTEKLRHACGAAVECVISDTCIAGMAEAAACEEKFSSQNVGLTITVTPCWCYGSETIDMDPTRPKAIWGFNGTERPGAVYLAAALAAHSQKGIPAFSIYGHDVQDADDTSIPADVEEKLLRFARAGLAVASMKGKSYLSLGGVSMGIAGSIVDHNFFESWLGMKVQAVDMTELRRRIDQKIYDEAELEMALTWADKNFRYGEDENNKQYQRNAEQSRAVLRESLLMAMCIRDMMQGNSKLADIGRVEESLGYNAIAAGFQGQRHWTDQYPNGDTAEAILNSSFDWNGVREPFVVATENDSLNGVAMLMGHQLTGTAQVFADVRTYWSPEAIERVTGHKLDGLAEHGIIHLINSGSAALDGSCKQRDSEGNPTMKPHWEISQQEADACLAATEWCPAIHEYFRGGGYSSRFLTEGGVPFTMTRVNIIKGLGPVLQIAEGWSVELPKDVHDILNKRTNSTWPTTWFAPRLTGKGPFTDVYSVMANWGANHGVLTIGHVGADFITLASMLRIPVCMHNVEETKVYRPSAWAAHGMDIEGQDYRACQNYGPLYKR</sequence>
<gene>
    <name evidence="1" type="primary">fucI</name>
    <name type="ordered locus">EC55989_3081</name>
</gene>
<organism>
    <name type="scientific">Escherichia coli (strain 55989 / EAEC)</name>
    <dbReference type="NCBI Taxonomy" id="585055"/>
    <lineage>
        <taxon>Bacteria</taxon>
        <taxon>Pseudomonadati</taxon>
        <taxon>Pseudomonadota</taxon>
        <taxon>Gammaproteobacteria</taxon>
        <taxon>Enterobacterales</taxon>
        <taxon>Enterobacteriaceae</taxon>
        <taxon>Escherichia</taxon>
    </lineage>
</organism>
<feature type="chain" id="PRO_1000165094" description="L-fucose isomerase">
    <location>
        <begin position="1"/>
        <end position="591"/>
    </location>
</feature>
<feature type="active site" description="Proton acceptor" evidence="1">
    <location>
        <position position="337"/>
    </location>
</feature>
<feature type="active site" description="Proton acceptor" evidence="1">
    <location>
        <position position="361"/>
    </location>
</feature>
<feature type="binding site" evidence="1">
    <location>
        <position position="337"/>
    </location>
    <ligand>
        <name>Mn(2+)</name>
        <dbReference type="ChEBI" id="CHEBI:29035"/>
    </ligand>
</feature>
<feature type="binding site" evidence="1">
    <location>
        <position position="361"/>
    </location>
    <ligand>
        <name>Mn(2+)</name>
        <dbReference type="ChEBI" id="CHEBI:29035"/>
    </ligand>
</feature>
<feature type="binding site" evidence="1">
    <location>
        <position position="528"/>
    </location>
    <ligand>
        <name>Mn(2+)</name>
        <dbReference type="ChEBI" id="CHEBI:29035"/>
    </ligand>
</feature>